<feature type="peptide" id="PRO_0000458781" description="Polistes-mastoparan-R2" evidence="3">
    <location>
        <begin position="1"/>
        <end position="14"/>
    </location>
</feature>
<feature type="modified residue" description="Leucine amide" evidence="3">
    <location>
        <position position="14"/>
    </location>
</feature>
<comment type="function">
    <text evidence="1 2 3">Mast cell degranulating peptide with high potency of histamine release (EC(50)=0.26 uM on rat mast cells). and high hemolytic activity (23% sheep erythrocytes lysis at 50 mM) (PubMed:17142988). Its mast cell degranulation activity may be related to the activation of G-protein coupled receptors in mast cells as well as interaction with other proteins located in cell endosomal membranes in the mast cells (By similarity).</text>
</comment>
<comment type="subcellular location">
    <subcellularLocation>
        <location evidence="3">Secreted</location>
    </subcellularLocation>
    <subcellularLocation>
        <location evidence="5">Target cell membrane</location>
    </subcellularLocation>
    <text evidence="6">Has an amphipathic alpha-helical conformation.</text>
</comment>
<comment type="mass spectrometry" mass="1495.7" method="MALDI" evidence="3"/>
<comment type="similarity">
    <text evidence="5">Belongs to the MCD family. Mastoparan subfamily.</text>
</comment>
<reference key="1">
    <citation type="journal article" date="2006" name="Biol. Pharm. Bull.">
        <title>Novel biologically active peptides from the venom of Polistes rothneyi iwatai.</title>
        <authorList>
            <person name="Murata K."/>
            <person name="Shinada T."/>
            <person name="Ohfune Y."/>
            <person name="Hisada M."/>
            <person name="Yasuda A."/>
            <person name="Naoki H."/>
            <person name="Nakajima T."/>
        </authorList>
    </citation>
    <scope>PROTEIN SEQUENCE</scope>
    <scope>FUNCTION</scope>
    <scope>AMIDATION AT LEU-14</scope>
    <scope>SUBCELLULAR LOCATION</scope>
    <scope>MASS SPECTROMETRY</scope>
    <source>
        <strain>Subsp. iwatai</strain>
        <tissue>Venom</tissue>
    </source>
</reference>
<protein>
    <recommendedName>
        <fullName evidence="4">Polistes-mastoparan-R2</fullName>
        <shortName evidence="4">Pm-R2</shortName>
    </recommendedName>
</protein>
<name>MAST2_POLRT</name>
<accession>P0DX36</accession>
<proteinExistence type="evidence at protein level"/>
<keyword id="KW-0027">Amidation</keyword>
<keyword id="KW-0204">Cytolysis</keyword>
<keyword id="KW-0903">Direct protein sequencing</keyword>
<keyword id="KW-1213">G-protein coupled receptor impairing toxin</keyword>
<keyword id="KW-0467">Mast cell degranulation</keyword>
<keyword id="KW-0472">Membrane</keyword>
<keyword id="KW-0964">Secreted</keyword>
<keyword id="KW-1052">Target cell membrane</keyword>
<keyword id="KW-1053">Target membrane</keyword>
<keyword id="KW-0800">Toxin</keyword>
<sequence length="14" mass="1514">LNFKALAALAKKIL</sequence>
<evidence type="ECO:0000250" key="1">
    <source>
        <dbReference type="UniProtKB" id="P01514"/>
    </source>
</evidence>
<evidence type="ECO:0000250" key="2">
    <source>
        <dbReference type="UniProtKB" id="P84914"/>
    </source>
</evidence>
<evidence type="ECO:0000269" key="3">
    <source>
    </source>
</evidence>
<evidence type="ECO:0000303" key="4">
    <source>
    </source>
</evidence>
<evidence type="ECO:0000305" key="5"/>
<evidence type="ECO:0000305" key="6">
    <source>
    </source>
</evidence>
<organism>
    <name type="scientific">Polistes rothneyi</name>
    <name type="common">Rothney's paper wasp</name>
    <dbReference type="NCBI Taxonomy" id="30208"/>
    <lineage>
        <taxon>Eukaryota</taxon>
        <taxon>Metazoa</taxon>
        <taxon>Ecdysozoa</taxon>
        <taxon>Arthropoda</taxon>
        <taxon>Hexapoda</taxon>
        <taxon>Insecta</taxon>
        <taxon>Pterygota</taxon>
        <taxon>Neoptera</taxon>
        <taxon>Endopterygota</taxon>
        <taxon>Hymenoptera</taxon>
        <taxon>Apocrita</taxon>
        <taxon>Aculeata</taxon>
        <taxon>Vespoidea</taxon>
        <taxon>Vespidae</taxon>
        <taxon>Polistinae</taxon>
        <taxon>Polistini</taxon>
        <taxon>Polistes</taxon>
    </lineage>
</organism>
<dbReference type="GO" id="GO:0005576">
    <property type="term" value="C:extracellular region"/>
    <property type="evidence" value="ECO:0007669"/>
    <property type="project" value="UniProtKB-SubCell"/>
</dbReference>
<dbReference type="GO" id="GO:0016020">
    <property type="term" value="C:membrane"/>
    <property type="evidence" value="ECO:0007669"/>
    <property type="project" value="UniProtKB-KW"/>
</dbReference>
<dbReference type="GO" id="GO:0044218">
    <property type="term" value="C:other organism cell membrane"/>
    <property type="evidence" value="ECO:0007669"/>
    <property type="project" value="UniProtKB-KW"/>
</dbReference>
<dbReference type="GO" id="GO:0090729">
    <property type="term" value="F:toxin activity"/>
    <property type="evidence" value="ECO:0007669"/>
    <property type="project" value="UniProtKB-KW"/>
</dbReference>
<dbReference type="GO" id="GO:0031640">
    <property type="term" value="P:killing of cells of another organism"/>
    <property type="evidence" value="ECO:0007669"/>
    <property type="project" value="UniProtKB-KW"/>
</dbReference>
<dbReference type="InterPro" id="IPR013213">
    <property type="entry name" value="Mastoparan"/>
</dbReference>
<dbReference type="Pfam" id="PF08249">
    <property type="entry name" value="Mastoparan"/>
    <property type="match status" value="1"/>
</dbReference>